<comment type="similarity">
    <text evidence="1">Belongs to the LarC family.</text>
</comment>
<sequence length="396" mass="42552">MKSLVFNPFSGAAGDMILGCALDLGADRGEVKELIESSAPVSMDIREVVKKGIKALDVRINVPEKEYFRTYPEIVDLVKASKLPSKVEASALDIFLKMAEAEAAVHGQPDLEKLHFHEVGQSDALADVIGSSAAIHSLNCDSVYCTPINVGSGTIECAHGTLPVPAPATLEILRRGKLYFRGGNVNKELLTPTGAAILAHFAKPVDNFPQGRAVAIGYGAGDAELQGPNVLQGVLIEPDSHLVPDIIEVLETNADDVSGEVLGNLFEELLSMGARDVAIMPATMKKGRPAHIIKVIAKPEDSAKLARKIIVETGSLGVRVMPARHRLTASRNIERIKIDLEGQEFETAVKIARDSEGVLLNISAEFEDCKKIAKTSGVPVREVMRRAEEAARKLFS</sequence>
<evidence type="ECO:0000255" key="1">
    <source>
        <dbReference type="HAMAP-Rule" id="MF_01074"/>
    </source>
</evidence>
<name>Y1617_METMA</name>
<protein>
    <recommendedName>
        <fullName evidence="1">Putative nickel insertion protein</fullName>
    </recommendedName>
</protein>
<accession>Q8PWH0</accession>
<reference key="1">
    <citation type="journal article" date="2002" name="J. Mol. Microbiol. Biotechnol.">
        <title>The genome of Methanosarcina mazei: evidence for lateral gene transfer between Bacteria and Archaea.</title>
        <authorList>
            <person name="Deppenmeier U."/>
            <person name="Johann A."/>
            <person name="Hartsch T."/>
            <person name="Merkl R."/>
            <person name="Schmitz R.A."/>
            <person name="Martinez-Arias R."/>
            <person name="Henne A."/>
            <person name="Wiezer A."/>
            <person name="Baeumer S."/>
            <person name="Jacobi C."/>
            <person name="Brueggemann H."/>
            <person name="Lienard T."/>
            <person name="Christmann A."/>
            <person name="Boemecke M."/>
            <person name="Steckel S."/>
            <person name="Bhattacharyya A."/>
            <person name="Lykidis A."/>
            <person name="Overbeek R."/>
            <person name="Klenk H.-P."/>
            <person name="Gunsalus R.P."/>
            <person name="Fritz H.-J."/>
            <person name="Gottschalk G."/>
        </authorList>
    </citation>
    <scope>NUCLEOTIDE SEQUENCE [LARGE SCALE GENOMIC DNA]</scope>
    <source>
        <strain>ATCC BAA-159 / DSM 3647 / Goe1 / Go1 / JCM 11833 / OCM 88</strain>
    </source>
</reference>
<gene>
    <name type="ordered locus">MM_1617</name>
</gene>
<dbReference type="EMBL" id="AE008384">
    <property type="protein sequence ID" value="AAM31313.1"/>
    <property type="molecule type" value="Genomic_DNA"/>
</dbReference>
<dbReference type="SMR" id="Q8PWH0"/>
<dbReference type="KEGG" id="mma:MM_1617"/>
<dbReference type="PATRIC" id="fig|192952.21.peg.1871"/>
<dbReference type="eggNOG" id="arCOG02701">
    <property type="taxonomic scope" value="Archaea"/>
</dbReference>
<dbReference type="HOGENOM" id="CLU_028523_2_1_2"/>
<dbReference type="Proteomes" id="UP000000595">
    <property type="component" value="Chromosome"/>
</dbReference>
<dbReference type="GO" id="GO:0016829">
    <property type="term" value="F:lyase activity"/>
    <property type="evidence" value="ECO:0007669"/>
    <property type="project" value="UniProtKB-UniRule"/>
</dbReference>
<dbReference type="GO" id="GO:0016151">
    <property type="term" value="F:nickel cation binding"/>
    <property type="evidence" value="ECO:0007669"/>
    <property type="project" value="UniProtKB-UniRule"/>
</dbReference>
<dbReference type="Gene3D" id="3.10.20.300">
    <property type="entry name" value="mk0293 like domain"/>
    <property type="match status" value="1"/>
</dbReference>
<dbReference type="Gene3D" id="3.30.70.1380">
    <property type="entry name" value="Transcriptional regulatory protein pf0864 domain like"/>
    <property type="match status" value="1"/>
</dbReference>
<dbReference type="HAMAP" id="MF_01074">
    <property type="entry name" value="LarC"/>
    <property type="match status" value="1"/>
</dbReference>
<dbReference type="InterPro" id="IPR002822">
    <property type="entry name" value="Ni_insertion"/>
</dbReference>
<dbReference type="NCBIfam" id="TIGR00299">
    <property type="entry name" value="nickel pincer cofactor biosynthesis protein LarC"/>
    <property type="match status" value="1"/>
</dbReference>
<dbReference type="PANTHER" id="PTHR36566">
    <property type="entry name" value="NICKEL INSERTION PROTEIN-RELATED"/>
    <property type="match status" value="1"/>
</dbReference>
<dbReference type="PANTHER" id="PTHR36566:SF1">
    <property type="entry name" value="PYRIDINIUM-3,5-BISTHIOCARBOXYLIC ACID MONONUCLEOTIDE NICKEL INSERTION PROTEIN"/>
    <property type="match status" value="1"/>
</dbReference>
<dbReference type="Pfam" id="PF01969">
    <property type="entry name" value="Ni_insertion"/>
    <property type="match status" value="1"/>
</dbReference>
<feature type="chain" id="PRO_0000146862" description="Putative nickel insertion protein">
    <location>
        <begin position="1"/>
        <end position="396"/>
    </location>
</feature>
<organism>
    <name type="scientific">Methanosarcina mazei (strain ATCC BAA-159 / DSM 3647 / Goe1 / Go1 / JCM 11833 / OCM 88)</name>
    <name type="common">Methanosarcina frisia</name>
    <dbReference type="NCBI Taxonomy" id="192952"/>
    <lineage>
        <taxon>Archaea</taxon>
        <taxon>Methanobacteriati</taxon>
        <taxon>Methanobacteriota</taxon>
        <taxon>Stenosarchaea group</taxon>
        <taxon>Methanomicrobia</taxon>
        <taxon>Methanosarcinales</taxon>
        <taxon>Methanosarcinaceae</taxon>
        <taxon>Methanosarcina</taxon>
    </lineage>
</organism>
<keyword id="KW-0533">Nickel</keyword>
<proteinExistence type="inferred from homology"/>